<dbReference type="EMBL" id="AK012581">
    <property type="protein sequence ID" value="BAC25371.1"/>
    <property type="molecule type" value="mRNA"/>
</dbReference>
<dbReference type="EMBL" id="AK032430">
    <property type="protein sequence ID" value="BAC27866.1"/>
    <property type="molecule type" value="mRNA"/>
</dbReference>
<dbReference type="EMBL" id="AK049809">
    <property type="protein sequence ID" value="BAC33928.1"/>
    <property type="molecule type" value="mRNA"/>
</dbReference>
<dbReference type="EMBL" id="AK167349">
    <property type="protein sequence ID" value="BAE39448.1"/>
    <property type="molecule type" value="mRNA"/>
</dbReference>
<dbReference type="EMBL" id="AK169829">
    <property type="protein sequence ID" value="BAE41396.1"/>
    <property type="molecule type" value="mRNA"/>
</dbReference>
<dbReference type="EMBL" id="AK171794">
    <property type="protein sequence ID" value="BAE42667.1"/>
    <property type="molecule type" value="mRNA"/>
</dbReference>
<dbReference type="EMBL" id="BC068130">
    <property type="protein sequence ID" value="AAH68130.1"/>
    <property type="molecule type" value="mRNA"/>
</dbReference>
<dbReference type="CCDS" id="CCDS25549.1"/>
<dbReference type="RefSeq" id="NP_001343387.1">
    <property type="nucleotide sequence ID" value="NM_001356458.1"/>
</dbReference>
<dbReference type="RefSeq" id="NP_001343388.1">
    <property type="nucleotide sequence ID" value="NM_001356459.1"/>
</dbReference>
<dbReference type="RefSeq" id="NP_765985.1">
    <property type="nucleotide sequence ID" value="NM_172397.4"/>
</dbReference>
<dbReference type="RefSeq" id="XP_006534082.1">
    <property type="nucleotide sequence ID" value="XM_006534019.3"/>
</dbReference>
<dbReference type="RefSeq" id="XP_006534083.1">
    <property type="nucleotide sequence ID" value="XM_006534020.3"/>
</dbReference>
<dbReference type="BMRB" id="Q8BGB5"/>
<dbReference type="SMR" id="Q8BGB5"/>
<dbReference type="BioGRID" id="212451">
    <property type="interactions" value="3"/>
</dbReference>
<dbReference type="FunCoup" id="Q8BGB5">
    <property type="interactions" value="992"/>
</dbReference>
<dbReference type="STRING" id="10090.ENSMUSP00000045357"/>
<dbReference type="GlyGen" id="Q8BGB5">
    <property type="glycosylation" value="1 site"/>
</dbReference>
<dbReference type="iPTMnet" id="Q8BGB5"/>
<dbReference type="PhosphoSitePlus" id="Q8BGB5"/>
<dbReference type="SwissPalm" id="Q8BGB5"/>
<dbReference type="jPOST" id="Q8BGB5"/>
<dbReference type="PaxDb" id="10090-ENSMUSP00000045357"/>
<dbReference type="PeptideAtlas" id="Q8BGB5"/>
<dbReference type="ProteomicsDB" id="265071"/>
<dbReference type="Pumba" id="Q8BGB5"/>
<dbReference type="Antibodypedia" id="45674">
    <property type="antibodies" value="85 antibodies from 20 providers"/>
</dbReference>
<dbReference type="DNASU" id="67803"/>
<dbReference type="Ensembl" id="ENSMUST00000045923.10">
    <property type="protein sequence ID" value="ENSMUSP00000045357.4"/>
    <property type="gene ID" value="ENSMUSG00000040699.14"/>
</dbReference>
<dbReference type="Ensembl" id="ENSMUST00000064545.11">
    <property type="protein sequence ID" value="ENSMUSP00000067070.5"/>
    <property type="gene ID" value="ENSMUSG00000040699.14"/>
</dbReference>
<dbReference type="Ensembl" id="ENSMUST00000106875.2">
    <property type="protein sequence ID" value="ENSMUSP00000102488.2"/>
    <property type="gene ID" value="ENSMUSG00000040699.14"/>
</dbReference>
<dbReference type="GeneID" id="67803"/>
<dbReference type="KEGG" id="mmu:67803"/>
<dbReference type="UCSC" id="uc007lyd.1">
    <property type="organism name" value="mouse"/>
</dbReference>
<dbReference type="AGR" id="MGI:1915053"/>
<dbReference type="CTD" id="80774"/>
<dbReference type="MGI" id="MGI:1915053">
    <property type="gene designation" value="Limd2"/>
</dbReference>
<dbReference type="VEuPathDB" id="HostDB:ENSMUSG00000040699"/>
<dbReference type="eggNOG" id="KOG1700">
    <property type="taxonomic scope" value="Eukaryota"/>
</dbReference>
<dbReference type="GeneTree" id="ENSGT00940000158377"/>
<dbReference type="HOGENOM" id="CLU_026811_3_0_1"/>
<dbReference type="InParanoid" id="Q8BGB5"/>
<dbReference type="OMA" id="APAHEAK"/>
<dbReference type="OrthoDB" id="6129702at2759"/>
<dbReference type="PhylomeDB" id="Q8BGB5"/>
<dbReference type="BioGRID-ORCS" id="67803">
    <property type="hits" value="5 hits in 76 CRISPR screens"/>
</dbReference>
<dbReference type="ChiTaRS" id="Limd2">
    <property type="organism name" value="mouse"/>
</dbReference>
<dbReference type="PRO" id="PR:Q8BGB5"/>
<dbReference type="Proteomes" id="UP000000589">
    <property type="component" value="Chromosome 11"/>
</dbReference>
<dbReference type="RNAct" id="Q8BGB5">
    <property type="molecule type" value="protein"/>
</dbReference>
<dbReference type="Bgee" id="ENSMUSG00000040699">
    <property type="expression patterns" value="Expressed in peripheral lymph node and 254 other cell types or tissues"/>
</dbReference>
<dbReference type="GO" id="GO:0005829">
    <property type="term" value="C:cytosol"/>
    <property type="evidence" value="ECO:0007669"/>
    <property type="project" value="Ensembl"/>
</dbReference>
<dbReference type="GO" id="GO:0005654">
    <property type="term" value="C:nucleoplasm"/>
    <property type="evidence" value="ECO:0007669"/>
    <property type="project" value="Ensembl"/>
</dbReference>
<dbReference type="GO" id="GO:0046872">
    <property type="term" value="F:metal ion binding"/>
    <property type="evidence" value="ECO:0007669"/>
    <property type="project" value="UniProtKB-KW"/>
</dbReference>
<dbReference type="CDD" id="cd09486">
    <property type="entry name" value="LIM_Eplin_like_1"/>
    <property type="match status" value="1"/>
</dbReference>
<dbReference type="FunFam" id="2.10.110.10:FF:000002">
    <property type="entry name" value="LIM domain and actin-binding 1"/>
    <property type="match status" value="1"/>
</dbReference>
<dbReference type="Gene3D" id="2.10.110.10">
    <property type="entry name" value="Cysteine Rich Protein"/>
    <property type="match status" value="1"/>
</dbReference>
<dbReference type="InterPro" id="IPR044115">
    <property type="entry name" value="LIM_LIMD2"/>
</dbReference>
<dbReference type="InterPro" id="IPR001781">
    <property type="entry name" value="Znf_LIM"/>
</dbReference>
<dbReference type="PANTHER" id="PTHR24206">
    <property type="entry name" value="OS06G0237300 PROTEIN"/>
    <property type="match status" value="1"/>
</dbReference>
<dbReference type="Pfam" id="PF00412">
    <property type="entry name" value="LIM"/>
    <property type="match status" value="1"/>
</dbReference>
<dbReference type="SMART" id="SM00132">
    <property type="entry name" value="LIM"/>
    <property type="match status" value="1"/>
</dbReference>
<dbReference type="SUPFAM" id="SSF57716">
    <property type="entry name" value="Glucocorticoid receptor-like (DNA-binding domain)"/>
    <property type="match status" value="2"/>
</dbReference>
<dbReference type="PROSITE" id="PS00478">
    <property type="entry name" value="LIM_DOMAIN_1"/>
    <property type="match status" value="1"/>
</dbReference>
<dbReference type="PROSITE" id="PS50023">
    <property type="entry name" value="LIM_DOMAIN_2"/>
    <property type="match status" value="1"/>
</dbReference>
<feature type="chain" id="PRO_0000251208" description="LIM domain-containing protein 2">
    <location>
        <begin position="1"/>
        <end position="128"/>
    </location>
</feature>
<feature type="domain" description="LIM zinc-binding" evidence="2">
    <location>
        <begin position="39"/>
        <end position="99"/>
    </location>
</feature>
<feature type="region of interest" description="Disordered" evidence="3">
    <location>
        <begin position="1"/>
        <end position="25"/>
    </location>
</feature>
<feature type="binding site" evidence="1">
    <location>
        <position position="41"/>
    </location>
    <ligand>
        <name>Zn(2+)</name>
        <dbReference type="ChEBI" id="CHEBI:29105"/>
        <label>1</label>
    </ligand>
</feature>
<feature type="binding site" evidence="1">
    <location>
        <position position="44"/>
    </location>
    <ligand>
        <name>Zn(2+)</name>
        <dbReference type="ChEBI" id="CHEBI:29105"/>
        <label>1</label>
    </ligand>
</feature>
<feature type="binding site" evidence="1">
    <location>
        <position position="62"/>
    </location>
    <ligand>
        <name>Zn(2+)</name>
        <dbReference type="ChEBI" id="CHEBI:29105"/>
        <label>1</label>
    </ligand>
</feature>
<feature type="binding site" evidence="1">
    <location>
        <position position="65"/>
    </location>
    <ligand>
        <name>Zn(2+)</name>
        <dbReference type="ChEBI" id="CHEBI:29105"/>
        <label>1</label>
    </ligand>
</feature>
<feature type="binding site" evidence="1">
    <location>
        <position position="68"/>
    </location>
    <ligand>
        <name>Zn(2+)</name>
        <dbReference type="ChEBI" id="CHEBI:29105"/>
        <label>2</label>
    </ligand>
</feature>
<feature type="binding site" evidence="1">
    <location>
        <position position="71"/>
    </location>
    <ligand>
        <name>Zn(2+)</name>
        <dbReference type="ChEBI" id="CHEBI:29105"/>
        <label>2</label>
    </ligand>
</feature>
<feature type="binding site" evidence="1">
    <location>
        <position position="89"/>
    </location>
    <ligand>
        <name>Zn(2+)</name>
        <dbReference type="ChEBI" id="CHEBI:29105"/>
        <label>2</label>
    </ligand>
</feature>
<feature type="binding site" evidence="1">
    <location>
        <position position="92"/>
    </location>
    <ligand>
        <name>Zn(2+)</name>
        <dbReference type="ChEBI" id="CHEBI:29105"/>
        <label>2</label>
    </ligand>
</feature>
<feature type="modified residue" description="N-acetylmethionine" evidence="1">
    <location>
        <position position="1"/>
    </location>
</feature>
<sequence>MFQAAGAAQATPSHEAKGSSGSSTVQRSKSFSLRAQVKETCAACQKTVYPMERLVADKLIFHNSCFCCKHCHTKLSLGSYAAMHGEFYCRPHFQQLFKSKGNYDEGFGRKQHKELWAHKEVDSGTKTA</sequence>
<comment type="function">
    <text evidence="1">Acts as an activator of the protein-kinase ILK, thereby regulating cell motility.</text>
</comment>
<comment type="subunit">
    <text evidence="1">Interacts with ILK.</text>
</comment>
<comment type="subcellular location">
    <subcellularLocation>
        <location evidence="1">Cytoplasm</location>
    </subcellularLocation>
    <subcellularLocation>
        <location evidence="1">Nucleus</location>
    </subcellularLocation>
    <text evidence="1">Mainly found in cytoplasm, concentrated in membrane ruffles and in streaks reminiscent of focal adhesion plaques. Also found in nucleus.</text>
</comment>
<evidence type="ECO:0000250" key="1">
    <source>
        <dbReference type="UniProtKB" id="Q9BT23"/>
    </source>
</evidence>
<evidence type="ECO:0000255" key="2">
    <source>
        <dbReference type="PROSITE-ProRule" id="PRU00125"/>
    </source>
</evidence>
<evidence type="ECO:0000256" key="3">
    <source>
        <dbReference type="SAM" id="MobiDB-lite"/>
    </source>
</evidence>
<evidence type="ECO:0000305" key="4"/>
<evidence type="ECO:0000312" key="5">
    <source>
        <dbReference type="MGI" id="MGI:1915053"/>
    </source>
</evidence>
<protein>
    <recommendedName>
        <fullName evidence="4">LIM domain-containing protein 2</fullName>
    </recommendedName>
</protein>
<proteinExistence type="evidence at protein level"/>
<name>LIMD2_MOUSE</name>
<gene>
    <name evidence="5" type="primary">Limd2</name>
</gene>
<keyword id="KW-0007">Acetylation</keyword>
<keyword id="KW-0963">Cytoplasm</keyword>
<keyword id="KW-0440">LIM domain</keyword>
<keyword id="KW-0479">Metal-binding</keyword>
<keyword id="KW-0539">Nucleus</keyword>
<keyword id="KW-1185">Reference proteome</keyword>
<keyword id="KW-0862">Zinc</keyword>
<reference key="1">
    <citation type="journal article" date="2005" name="Science">
        <title>The transcriptional landscape of the mammalian genome.</title>
        <authorList>
            <person name="Carninci P."/>
            <person name="Kasukawa T."/>
            <person name="Katayama S."/>
            <person name="Gough J."/>
            <person name="Frith M.C."/>
            <person name="Maeda N."/>
            <person name="Oyama R."/>
            <person name="Ravasi T."/>
            <person name="Lenhard B."/>
            <person name="Wells C."/>
            <person name="Kodzius R."/>
            <person name="Shimokawa K."/>
            <person name="Bajic V.B."/>
            <person name="Brenner S.E."/>
            <person name="Batalov S."/>
            <person name="Forrest A.R."/>
            <person name="Zavolan M."/>
            <person name="Davis M.J."/>
            <person name="Wilming L.G."/>
            <person name="Aidinis V."/>
            <person name="Allen J.E."/>
            <person name="Ambesi-Impiombato A."/>
            <person name="Apweiler R."/>
            <person name="Aturaliya R.N."/>
            <person name="Bailey T.L."/>
            <person name="Bansal M."/>
            <person name="Baxter L."/>
            <person name="Beisel K.W."/>
            <person name="Bersano T."/>
            <person name="Bono H."/>
            <person name="Chalk A.M."/>
            <person name="Chiu K.P."/>
            <person name="Choudhary V."/>
            <person name="Christoffels A."/>
            <person name="Clutterbuck D.R."/>
            <person name="Crowe M.L."/>
            <person name="Dalla E."/>
            <person name="Dalrymple B.P."/>
            <person name="de Bono B."/>
            <person name="Della Gatta G."/>
            <person name="di Bernardo D."/>
            <person name="Down T."/>
            <person name="Engstrom P."/>
            <person name="Fagiolini M."/>
            <person name="Faulkner G."/>
            <person name="Fletcher C.F."/>
            <person name="Fukushima T."/>
            <person name="Furuno M."/>
            <person name="Futaki S."/>
            <person name="Gariboldi M."/>
            <person name="Georgii-Hemming P."/>
            <person name="Gingeras T.R."/>
            <person name="Gojobori T."/>
            <person name="Green R.E."/>
            <person name="Gustincich S."/>
            <person name="Harbers M."/>
            <person name="Hayashi Y."/>
            <person name="Hensch T.K."/>
            <person name="Hirokawa N."/>
            <person name="Hill D."/>
            <person name="Huminiecki L."/>
            <person name="Iacono M."/>
            <person name="Ikeo K."/>
            <person name="Iwama A."/>
            <person name="Ishikawa T."/>
            <person name="Jakt M."/>
            <person name="Kanapin A."/>
            <person name="Katoh M."/>
            <person name="Kawasawa Y."/>
            <person name="Kelso J."/>
            <person name="Kitamura H."/>
            <person name="Kitano H."/>
            <person name="Kollias G."/>
            <person name="Krishnan S.P."/>
            <person name="Kruger A."/>
            <person name="Kummerfeld S.K."/>
            <person name="Kurochkin I.V."/>
            <person name="Lareau L.F."/>
            <person name="Lazarevic D."/>
            <person name="Lipovich L."/>
            <person name="Liu J."/>
            <person name="Liuni S."/>
            <person name="McWilliam S."/>
            <person name="Madan Babu M."/>
            <person name="Madera M."/>
            <person name="Marchionni L."/>
            <person name="Matsuda H."/>
            <person name="Matsuzawa S."/>
            <person name="Miki H."/>
            <person name="Mignone F."/>
            <person name="Miyake S."/>
            <person name="Morris K."/>
            <person name="Mottagui-Tabar S."/>
            <person name="Mulder N."/>
            <person name="Nakano N."/>
            <person name="Nakauchi H."/>
            <person name="Ng P."/>
            <person name="Nilsson R."/>
            <person name="Nishiguchi S."/>
            <person name="Nishikawa S."/>
            <person name="Nori F."/>
            <person name="Ohara O."/>
            <person name="Okazaki Y."/>
            <person name="Orlando V."/>
            <person name="Pang K.C."/>
            <person name="Pavan W.J."/>
            <person name="Pavesi G."/>
            <person name="Pesole G."/>
            <person name="Petrovsky N."/>
            <person name="Piazza S."/>
            <person name="Reed J."/>
            <person name="Reid J.F."/>
            <person name="Ring B.Z."/>
            <person name="Ringwald M."/>
            <person name="Rost B."/>
            <person name="Ruan Y."/>
            <person name="Salzberg S.L."/>
            <person name="Sandelin A."/>
            <person name="Schneider C."/>
            <person name="Schoenbach C."/>
            <person name="Sekiguchi K."/>
            <person name="Semple C.A."/>
            <person name="Seno S."/>
            <person name="Sessa L."/>
            <person name="Sheng Y."/>
            <person name="Shibata Y."/>
            <person name="Shimada H."/>
            <person name="Shimada K."/>
            <person name="Silva D."/>
            <person name="Sinclair B."/>
            <person name="Sperling S."/>
            <person name="Stupka E."/>
            <person name="Sugiura K."/>
            <person name="Sultana R."/>
            <person name="Takenaka Y."/>
            <person name="Taki K."/>
            <person name="Tammoja K."/>
            <person name="Tan S.L."/>
            <person name="Tang S."/>
            <person name="Taylor M.S."/>
            <person name="Tegner J."/>
            <person name="Teichmann S.A."/>
            <person name="Ueda H.R."/>
            <person name="van Nimwegen E."/>
            <person name="Verardo R."/>
            <person name="Wei C.L."/>
            <person name="Yagi K."/>
            <person name="Yamanishi H."/>
            <person name="Zabarovsky E."/>
            <person name="Zhu S."/>
            <person name="Zimmer A."/>
            <person name="Hide W."/>
            <person name="Bult C."/>
            <person name="Grimmond S.M."/>
            <person name="Teasdale R.D."/>
            <person name="Liu E.T."/>
            <person name="Brusic V."/>
            <person name="Quackenbush J."/>
            <person name="Wahlestedt C."/>
            <person name="Mattick J.S."/>
            <person name="Hume D.A."/>
            <person name="Kai C."/>
            <person name="Sasaki D."/>
            <person name="Tomaru Y."/>
            <person name="Fukuda S."/>
            <person name="Kanamori-Katayama M."/>
            <person name="Suzuki M."/>
            <person name="Aoki J."/>
            <person name="Arakawa T."/>
            <person name="Iida J."/>
            <person name="Imamura K."/>
            <person name="Itoh M."/>
            <person name="Kato T."/>
            <person name="Kawaji H."/>
            <person name="Kawagashira N."/>
            <person name="Kawashima T."/>
            <person name="Kojima M."/>
            <person name="Kondo S."/>
            <person name="Konno H."/>
            <person name="Nakano K."/>
            <person name="Ninomiya N."/>
            <person name="Nishio T."/>
            <person name="Okada M."/>
            <person name="Plessy C."/>
            <person name="Shibata K."/>
            <person name="Shiraki T."/>
            <person name="Suzuki S."/>
            <person name="Tagami M."/>
            <person name="Waki K."/>
            <person name="Watahiki A."/>
            <person name="Okamura-Oho Y."/>
            <person name="Suzuki H."/>
            <person name="Kawai J."/>
            <person name="Hayashizaki Y."/>
        </authorList>
    </citation>
    <scope>NUCLEOTIDE SEQUENCE [LARGE SCALE MRNA]</scope>
    <source>
        <strain>C57BL/6J</strain>
        <strain>NOD</strain>
        <tissue>Hippocampus</tissue>
        <tissue>Olfactory bulb</tissue>
        <tissue>Placenta</tissue>
        <tissue>Spleen</tissue>
        <tissue>Thymus</tissue>
    </source>
</reference>
<reference key="2">
    <citation type="journal article" date="2004" name="Genome Res.">
        <title>The status, quality, and expansion of the NIH full-length cDNA project: the Mammalian Gene Collection (MGC).</title>
        <authorList>
            <consortium name="The MGC Project Team"/>
        </authorList>
    </citation>
    <scope>NUCLEOTIDE SEQUENCE [LARGE SCALE MRNA]</scope>
    <source>
        <strain>C57BL/6J</strain>
        <tissue>Brain</tissue>
    </source>
</reference>
<reference key="3">
    <citation type="journal article" date="2010" name="Cell">
        <title>A tissue-specific atlas of mouse protein phosphorylation and expression.</title>
        <authorList>
            <person name="Huttlin E.L."/>
            <person name="Jedrychowski M.P."/>
            <person name="Elias J.E."/>
            <person name="Goswami T."/>
            <person name="Rad R."/>
            <person name="Beausoleil S.A."/>
            <person name="Villen J."/>
            <person name="Haas W."/>
            <person name="Sowa M.E."/>
            <person name="Gygi S.P."/>
        </authorList>
    </citation>
    <scope>IDENTIFICATION BY MASS SPECTROMETRY [LARGE SCALE ANALYSIS]</scope>
    <source>
        <tissue>Testis</tissue>
    </source>
</reference>
<organism>
    <name type="scientific">Mus musculus</name>
    <name type="common">Mouse</name>
    <dbReference type="NCBI Taxonomy" id="10090"/>
    <lineage>
        <taxon>Eukaryota</taxon>
        <taxon>Metazoa</taxon>
        <taxon>Chordata</taxon>
        <taxon>Craniata</taxon>
        <taxon>Vertebrata</taxon>
        <taxon>Euteleostomi</taxon>
        <taxon>Mammalia</taxon>
        <taxon>Eutheria</taxon>
        <taxon>Euarchontoglires</taxon>
        <taxon>Glires</taxon>
        <taxon>Rodentia</taxon>
        <taxon>Myomorpha</taxon>
        <taxon>Muroidea</taxon>
        <taxon>Muridae</taxon>
        <taxon>Murinae</taxon>
        <taxon>Mus</taxon>
        <taxon>Mus</taxon>
    </lineage>
</organism>
<accession>Q8BGB5</accession>